<feature type="chain" id="PRO_1000097535" description="Queuine tRNA-ribosyltransferase">
    <location>
        <begin position="1"/>
        <end position="372"/>
    </location>
</feature>
<feature type="region of interest" description="RNA binding" evidence="1">
    <location>
        <begin position="262"/>
        <end position="268"/>
    </location>
</feature>
<feature type="region of interest" description="RNA binding; important for wobble base 34 recognition" evidence="1">
    <location>
        <begin position="286"/>
        <end position="290"/>
    </location>
</feature>
<feature type="active site" description="Proton acceptor" evidence="1">
    <location>
        <position position="89"/>
    </location>
</feature>
<feature type="active site" description="Nucleophile" evidence="1">
    <location>
        <position position="281"/>
    </location>
</feature>
<feature type="binding site" evidence="1">
    <location>
        <begin position="89"/>
        <end position="93"/>
    </location>
    <ligand>
        <name>substrate</name>
    </ligand>
</feature>
<feature type="binding site" evidence="1">
    <location>
        <position position="161"/>
    </location>
    <ligand>
        <name>substrate</name>
    </ligand>
</feature>
<feature type="binding site" evidence="1">
    <location>
        <position position="232"/>
    </location>
    <ligand>
        <name>substrate</name>
    </ligand>
</feature>
<feature type="binding site" evidence="1">
    <location>
        <position position="319"/>
    </location>
    <ligand>
        <name>Zn(2+)</name>
        <dbReference type="ChEBI" id="CHEBI:29105"/>
    </ligand>
</feature>
<feature type="binding site" evidence="1">
    <location>
        <position position="321"/>
    </location>
    <ligand>
        <name>Zn(2+)</name>
        <dbReference type="ChEBI" id="CHEBI:29105"/>
    </ligand>
</feature>
<feature type="binding site" evidence="1">
    <location>
        <position position="324"/>
    </location>
    <ligand>
        <name>Zn(2+)</name>
        <dbReference type="ChEBI" id="CHEBI:29105"/>
    </ligand>
</feature>
<feature type="binding site" evidence="1">
    <location>
        <position position="351"/>
    </location>
    <ligand>
        <name>Zn(2+)</name>
        <dbReference type="ChEBI" id="CHEBI:29105"/>
    </ligand>
</feature>
<proteinExistence type="inferred from homology"/>
<organism>
    <name type="scientific">Chlamydia trachomatis serovar L2b (strain UCH-1/proctitis)</name>
    <dbReference type="NCBI Taxonomy" id="471473"/>
    <lineage>
        <taxon>Bacteria</taxon>
        <taxon>Pseudomonadati</taxon>
        <taxon>Chlamydiota</taxon>
        <taxon>Chlamydiia</taxon>
        <taxon>Chlamydiales</taxon>
        <taxon>Chlamydiaceae</taxon>
        <taxon>Chlamydia/Chlamydophila group</taxon>
        <taxon>Chlamydia</taxon>
    </lineage>
</organism>
<sequence>MALRFEILHQSKKSRARVGRIETAHGYIDTPAFVPVATNGALKGVLDHSNIPLMFCNTYHLIVHPGAEAIAAMGGLHQFIGRNAPIITDSGGFQIFSLAYGSVAEEIKSCGKKKGGNTIIKVNDDGVHFKSYRDGRKLFLSPEISVQAQKDLGADIILPLDELLPFHADPTYFHQSSQRTYVWEKRSLDYHLKNPGIQSMYGVIHGGTFPDQRKLGCKFVEDLPFDGSAIGGSLGKNLQDIVEVVGVTAANLSAERPRHLLGIGDLPSIWATVGFGIDSFDSSYPTKAARHGMILTSQGPLKINNQRYSSDLNPIEPGCSCLACSQGITRAYLRHLFKVHEPNAGIWASIHNMHHMQKVMREIREGILNDRI</sequence>
<reference key="1">
    <citation type="journal article" date="2008" name="Genome Res.">
        <title>Chlamydia trachomatis: genome sequence analysis of lymphogranuloma venereum isolates.</title>
        <authorList>
            <person name="Thomson N.R."/>
            <person name="Holden M.T.G."/>
            <person name="Carder C."/>
            <person name="Lennard N."/>
            <person name="Lockey S.J."/>
            <person name="Marsh P."/>
            <person name="Skipp P."/>
            <person name="O'Connor C.D."/>
            <person name="Goodhead I."/>
            <person name="Norbertzcak H."/>
            <person name="Harris B."/>
            <person name="Ormond D."/>
            <person name="Rance R."/>
            <person name="Quail M.A."/>
            <person name="Parkhill J."/>
            <person name="Stephens R.S."/>
            <person name="Clarke I.N."/>
        </authorList>
    </citation>
    <scope>NUCLEOTIDE SEQUENCE [LARGE SCALE GENOMIC DNA]</scope>
    <source>
        <strain>UCH-1/proctitis</strain>
    </source>
</reference>
<protein>
    <recommendedName>
        <fullName evidence="1">Queuine tRNA-ribosyltransferase</fullName>
        <ecNumber evidence="1">2.4.2.29</ecNumber>
    </recommendedName>
    <alternativeName>
        <fullName evidence="1">Guanine insertion enzyme</fullName>
    </alternativeName>
    <alternativeName>
        <fullName evidence="1">tRNA-guanine transglycosylase</fullName>
    </alternativeName>
</protein>
<keyword id="KW-0328">Glycosyltransferase</keyword>
<keyword id="KW-0479">Metal-binding</keyword>
<keyword id="KW-0671">Queuosine biosynthesis</keyword>
<keyword id="KW-0808">Transferase</keyword>
<keyword id="KW-0819">tRNA processing</keyword>
<keyword id="KW-0862">Zinc</keyword>
<evidence type="ECO:0000255" key="1">
    <source>
        <dbReference type="HAMAP-Rule" id="MF_00168"/>
    </source>
</evidence>
<dbReference type="EC" id="2.4.2.29" evidence="1"/>
<dbReference type="EMBL" id="AM884177">
    <property type="protein sequence ID" value="CAP06838.1"/>
    <property type="molecule type" value="Genomic_DNA"/>
</dbReference>
<dbReference type="RefSeq" id="WP_009873629.1">
    <property type="nucleotide sequence ID" value="NC_010280.2"/>
</dbReference>
<dbReference type="SMR" id="B0BBH3"/>
<dbReference type="KEGG" id="ctl:CTLon_0440"/>
<dbReference type="HOGENOM" id="CLU_022060_0_2_0"/>
<dbReference type="UniPathway" id="UPA00392"/>
<dbReference type="Proteomes" id="UP001154401">
    <property type="component" value="Chromosome"/>
</dbReference>
<dbReference type="GO" id="GO:0046872">
    <property type="term" value="F:metal ion binding"/>
    <property type="evidence" value="ECO:0007669"/>
    <property type="project" value="UniProtKB-KW"/>
</dbReference>
<dbReference type="GO" id="GO:0008479">
    <property type="term" value="F:tRNA-guanosine(34) queuine transglycosylase activity"/>
    <property type="evidence" value="ECO:0007669"/>
    <property type="project" value="UniProtKB-UniRule"/>
</dbReference>
<dbReference type="GO" id="GO:0008616">
    <property type="term" value="P:queuosine biosynthetic process"/>
    <property type="evidence" value="ECO:0007669"/>
    <property type="project" value="UniProtKB-UniRule"/>
</dbReference>
<dbReference type="GO" id="GO:0101030">
    <property type="term" value="P:tRNA-guanine transglycosylation"/>
    <property type="evidence" value="ECO:0007669"/>
    <property type="project" value="InterPro"/>
</dbReference>
<dbReference type="Gene3D" id="3.20.20.105">
    <property type="entry name" value="Queuine tRNA-ribosyltransferase-like"/>
    <property type="match status" value="1"/>
</dbReference>
<dbReference type="HAMAP" id="MF_00168">
    <property type="entry name" value="Q_tRNA_Tgt"/>
    <property type="match status" value="1"/>
</dbReference>
<dbReference type="InterPro" id="IPR004803">
    <property type="entry name" value="TGT"/>
</dbReference>
<dbReference type="InterPro" id="IPR036511">
    <property type="entry name" value="TGT-like_sf"/>
</dbReference>
<dbReference type="InterPro" id="IPR002616">
    <property type="entry name" value="tRNA_ribo_trans-like"/>
</dbReference>
<dbReference type="NCBIfam" id="TIGR00430">
    <property type="entry name" value="Q_tRNA_tgt"/>
    <property type="match status" value="1"/>
</dbReference>
<dbReference type="NCBIfam" id="TIGR00449">
    <property type="entry name" value="tgt_general"/>
    <property type="match status" value="1"/>
</dbReference>
<dbReference type="PANTHER" id="PTHR43468">
    <property type="match status" value="1"/>
</dbReference>
<dbReference type="PANTHER" id="PTHR43468:SF1">
    <property type="entry name" value="TRNA-GUANOSINE(34) QUEUINE TRANSGLYCOSYLASE"/>
    <property type="match status" value="1"/>
</dbReference>
<dbReference type="Pfam" id="PF01702">
    <property type="entry name" value="TGT"/>
    <property type="match status" value="1"/>
</dbReference>
<dbReference type="SUPFAM" id="SSF51713">
    <property type="entry name" value="tRNA-guanine transglycosylase"/>
    <property type="match status" value="1"/>
</dbReference>
<name>TGT_CHLTB</name>
<accession>B0BBH3</accession>
<comment type="function">
    <text evidence="1">Catalyzes the base-exchange of a guanine (G) residue with the queuine precursor 7-aminomethyl-7-deazaguanine (PreQ1) at position 34 (anticodon wobble position) in tRNAs with GU(N) anticodons (tRNA-Asp, -Asn, -His and -Tyr). Catalysis occurs through a double-displacement mechanism. The nucleophile active site attacks the C1' of nucleotide 34 to detach the guanine base from the RNA, forming a covalent enzyme-RNA intermediate. The proton acceptor active site deprotonates the incoming PreQ1, allowing a nucleophilic attack on the C1' of the ribose to form the product. After dissociation, two additional enzymatic reactions on the tRNA convert PreQ1 to queuine (Q), resulting in the hypermodified nucleoside queuosine (7-(((4,5-cis-dihydroxy-2-cyclopenten-1-yl)amino)methyl)-7-deazaguanosine).</text>
</comment>
<comment type="catalytic activity">
    <reaction evidence="1">
        <text>7-aminomethyl-7-carbaguanine + guanosine(34) in tRNA = 7-aminomethyl-7-carbaguanosine(34) in tRNA + guanine</text>
        <dbReference type="Rhea" id="RHEA:24104"/>
        <dbReference type="Rhea" id="RHEA-COMP:10341"/>
        <dbReference type="Rhea" id="RHEA-COMP:10342"/>
        <dbReference type="ChEBI" id="CHEBI:16235"/>
        <dbReference type="ChEBI" id="CHEBI:58703"/>
        <dbReference type="ChEBI" id="CHEBI:74269"/>
        <dbReference type="ChEBI" id="CHEBI:82833"/>
        <dbReference type="EC" id="2.4.2.29"/>
    </reaction>
</comment>
<comment type="cofactor">
    <cofactor evidence="1">
        <name>Zn(2+)</name>
        <dbReference type="ChEBI" id="CHEBI:29105"/>
    </cofactor>
    <text evidence="1">Binds 1 zinc ion per subunit.</text>
</comment>
<comment type="pathway">
    <text evidence="1">tRNA modification; tRNA-queuosine biosynthesis.</text>
</comment>
<comment type="subunit">
    <text evidence="1">Homodimer. Within each dimer, one monomer is responsible for RNA recognition and catalysis, while the other monomer binds to the replacement base PreQ1.</text>
</comment>
<comment type="similarity">
    <text evidence="1">Belongs to the queuine tRNA-ribosyltransferase family.</text>
</comment>
<gene>
    <name evidence="1" type="primary">tgt</name>
    <name type="ordered locus">CTLon_0440</name>
</gene>